<keyword id="KW-0687">Ribonucleoprotein</keyword>
<keyword id="KW-0689">Ribosomal protein</keyword>
<keyword id="KW-0694">RNA-binding</keyword>
<keyword id="KW-0699">rRNA-binding</keyword>
<name>RS17_DEHMB</name>
<dbReference type="EMBL" id="CP000688">
    <property type="protein sequence ID" value="ABQ17045.1"/>
    <property type="molecule type" value="Genomic_DNA"/>
</dbReference>
<dbReference type="SMR" id="A5FRY4"/>
<dbReference type="KEGG" id="deb:DehaBAV1_0460"/>
<dbReference type="PATRIC" id="fig|216389.18.peg.503"/>
<dbReference type="HOGENOM" id="CLU_073626_1_0_0"/>
<dbReference type="GO" id="GO:0022627">
    <property type="term" value="C:cytosolic small ribosomal subunit"/>
    <property type="evidence" value="ECO:0007669"/>
    <property type="project" value="TreeGrafter"/>
</dbReference>
<dbReference type="GO" id="GO:0019843">
    <property type="term" value="F:rRNA binding"/>
    <property type="evidence" value="ECO:0007669"/>
    <property type="project" value="UniProtKB-UniRule"/>
</dbReference>
<dbReference type="GO" id="GO:0003735">
    <property type="term" value="F:structural constituent of ribosome"/>
    <property type="evidence" value="ECO:0007669"/>
    <property type="project" value="InterPro"/>
</dbReference>
<dbReference type="GO" id="GO:0006412">
    <property type="term" value="P:translation"/>
    <property type="evidence" value="ECO:0007669"/>
    <property type="project" value="UniProtKB-UniRule"/>
</dbReference>
<dbReference type="CDD" id="cd00364">
    <property type="entry name" value="Ribosomal_uS17"/>
    <property type="match status" value="1"/>
</dbReference>
<dbReference type="Gene3D" id="2.40.50.140">
    <property type="entry name" value="Nucleic acid-binding proteins"/>
    <property type="match status" value="1"/>
</dbReference>
<dbReference type="HAMAP" id="MF_01345_B">
    <property type="entry name" value="Ribosomal_uS17_B"/>
    <property type="match status" value="1"/>
</dbReference>
<dbReference type="InterPro" id="IPR012340">
    <property type="entry name" value="NA-bd_OB-fold"/>
</dbReference>
<dbReference type="InterPro" id="IPR000266">
    <property type="entry name" value="Ribosomal_uS17"/>
</dbReference>
<dbReference type="InterPro" id="IPR019984">
    <property type="entry name" value="Ribosomal_uS17_bact/chlr"/>
</dbReference>
<dbReference type="InterPro" id="IPR019979">
    <property type="entry name" value="Ribosomal_uS17_CS"/>
</dbReference>
<dbReference type="NCBIfam" id="NF004123">
    <property type="entry name" value="PRK05610.1"/>
    <property type="match status" value="1"/>
</dbReference>
<dbReference type="NCBIfam" id="TIGR03635">
    <property type="entry name" value="uS17_bact"/>
    <property type="match status" value="1"/>
</dbReference>
<dbReference type="PANTHER" id="PTHR10744">
    <property type="entry name" value="40S RIBOSOMAL PROTEIN S11 FAMILY MEMBER"/>
    <property type="match status" value="1"/>
</dbReference>
<dbReference type="PANTHER" id="PTHR10744:SF1">
    <property type="entry name" value="SMALL RIBOSOMAL SUBUNIT PROTEIN US17M"/>
    <property type="match status" value="1"/>
</dbReference>
<dbReference type="Pfam" id="PF00366">
    <property type="entry name" value="Ribosomal_S17"/>
    <property type="match status" value="1"/>
</dbReference>
<dbReference type="PRINTS" id="PR00973">
    <property type="entry name" value="RIBOSOMALS17"/>
</dbReference>
<dbReference type="SUPFAM" id="SSF50249">
    <property type="entry name" value="Nucleic acid-binding proteins"/>
    <property type="match status" value="1"/>
</dbReference>
<dbReference type="PROSITE" id="PS00056">
    <property type="entry name" value="RIBOSOMAL_S17"/>
    <property type="match status" value="1"/>
</dbReference>
<evidence type="ECO:0000255" key="1">
    <source>
        <dbReference type="HAMAP-Rule" id="MF_01345"/>
    </source>
</evidence>
<evidence type="ECO:0000305" key="2"/>
<organism>
    <name type="scientific">Dehalococcoides mccartyi (strain ATCC BAA-2100 / JCM 16839 / KCTC 5957 / BAV1)</name>
    <dbReference type="NCBI Taxonomy" id="216389"/>
    <lineage>
        <taxon>Bacteria</taxon>
        <taxon>Bacillati</taxon>
        <taxon>Chloroflexota</taxon>
        <taxon>Dehalococcoidia</taxon>
        <taxon>Dehalococcoidales</taxon>
        <taxon>Dehalococcoidaceae</taxon>
        <taxon>Dehalococcoides</taxon>
    </lineage>
</organism>
<sequence length="90" mass="10506">MEIKNKTRIGHVISDKMEKTIVVGIDVVKRHPLYKKTYRRTMKYLVHDEKNEAKIGDMIEIVECRPISKGKYWRLSKIITKGHIVAAQEA</sequence>
<protein>
    <recommendedName>
        <fullName evidence="1">Small ribosomal subunit protein uS17</fullName>
    </recommendedName>
    <alternativeName>
        <fullName evidence="2">30S ribosomal protein S17</fullName>
    </alternativeName>
</protein>
<accession>A5FRY4</accession>
<gene>
    <name evidence="1" type="primary">rpsQ</name>
    <name type="ordered locus">DehaBAV1_0460</name>
</gene>
<comment type="function">
    <text evidence="1">One of the primary rRNA binding proteins, it binds specifically to the 5'-end of 16S ribosomal RNA.</text>
</comment>
<comment type="subunit">
    <text evidence="1">Part of the 30S ribosomal subunit.</text>
</comment>
<comment type="similarity">
    <text evidence="1">Belongs to the universal ribosomal protein uS17 family.</text>
</comment>
<reference key="1">
    <citation type="submission" date="2007-05" db="EMBL/GenBank/DDBJ databases">
        <title>Complete sequence of Dehalococcoides sp. BAV1.</title>
        <authorList>
            <consortium name="US DOE Joint Genome Institute"/>
            <person name="Copeland A."/>
            <person name="Lucas S."/>
            <person name="Lapidus A."/>
            <person name="Barry K."/>
            <person name="Detter J.C."/>
            <person name="Glavina del Rio T."/>
            <person name="Hammon N."/>
            <person name="Israni S."/>
            <person name="Pitluck S."/>
            <person name="Lowry S."/>
            <person name="Clum A."/>
            <person name="Schmutz J."/>
            <person name="Larimer F."/>
            <person name="Land M."/>
            <person name="Hauser L."/>
            <person name="Kyrpides N."/>
            <person name="Kim E."/>
            <person name="Ritalahti K.M."/>
            <person name="Loeffler F."/>
            <person name="Richardson P."/>
        </authorList>
    </citation>
    <scope>NUCLEOTIDE SEQUENCE [LARGE SCALE GENOMIC DNA]</scope>
    <source>
        <strain>ATCC BAA-2100 / JCM 16839 / KCTC 5957 / BAV1</strain>
    </source>
</reference>
<feature type="chain" id="PRO_1000086838" description="Small ribosomal subunit protein uS17">
    <location>
        <begin position="1"/>
        <end position="90"/>
    </location>
</feature>
<proteinExistence type="inferred from homology"/>